<organism>
    <name type="scientific">Bradyrhizobium sp. (strain ORS 278)</name>
    <dbReference type="NCBI Taxonomy" id="114615"/>
    <lineage>
        <taxon>Bacteria</taxon>
        <taxon>Pseudomonadati</taxon>
        <taxon>Pseudomonadota</taxon>
        <taxon>Alphaproteobacteria</taxon>
        <taxon>Hyphomicrobiales</taxon>
        <taxon>Nitrobacteraceae</taxon>
        <taxon>Bradyrhizobium</taxon>
    </lineage>
</organism>
<protein>
    <recommendedName>
        <fullName evidence="1">Pantothenate kinase</fullName>
        <ecNumber evidence="1">2.7.1.33</ecNumber>
    </recommendedName>
    <alternativeName>
        <fullName evidence="1">Pantothenic acid kinase</fullName>
    </alternativeName>
</protein>
<keyword id="KW-0067">ATP-binding</keyword>
<keyword id="KW-0173">Coenzyme A biosynthesis</keyword>
<keyword id="KW-0963">Cytoplasm</keyword>
<keyword id="KW-0418">Kinase</keyword>
<keyword id="KW-0547">Nucleotide-binding</keyword>
<keyword id="KW-1185">Reference proteome</keyword>
<keyword id="KW-0808">Transferase</keyword>
<feature type="chain" id="PRO_1000043212" description="Pantothenate kinase">
    <location>
        <begin position="1"/>
        <end position="318"/>
    </location>
</feature>
<feature type="binding site" evidence="1">
    <location>
        <begin position="96"/>
        <end position="103"/>
    </location>
    <ligand>
        <name>ATP</name>
        <dbReference type="ChEBI" id="CHEBI:30616"/>
    </ligand>
</feature>
<name>COAA_BRASO</name>
<proteinExistence type="inferred from homology"/>
<reference key="1">
    <citation type="journal article" date="2007" name="Science">
        <title>Legumes symbioses: absence of nod genes in photosynthetic bradyrhizobia.</title>
        <authorList>
            <person name="Giraud E."/>
            <person name="Moulin L."/>
            <person name="Vallenet D."/>
            <person name="Barbe V."/>
            <person name="Cytryn E."/>
            <person name="Avarre J.-C."/>
            <person name="Jaubert M."/>
            <person name="Simon D."/>
            <person name="Cartieaux F."/>
            <person name="Prin Y."/>
            <person name="Bena G."/>
            <person name="Hannibal L."/>
            <person name="Fardoux J."/>
            <person name="Kojadinovic M."/>
            <person name="Vuillet L."/>
            <person name="Lajus A."/>
            <person name="Cruveiller S."/>
            <person name="Rouy Z."/>
            <person name="Mangenot S."/>
            <person name="Segurens B."/>
            <person name="Dossat C."/>
            <person name="Franck W.L."/>
            <person name="Chang W.-S."/>
            <person name="Saunders E."/>
            <person name="Bruce D."/>
            <person name="Richardson P."/>
            <person name="Normand P."/>
            <person name="Dreyfus B."/>
            <person name="Pignol D."/>
            <person name="Stacey G."/>
            <person name="Emerich D."/>
            <person name="Vermeglio A."/>
            <person name="Medigue C."/>
            <person name="Sadowsky M."/>
        </authorList>
    </citation>
    <scope>NUCLEOTIDE SEQUENCE [LARGE SCALE GENOMIC DNA]</scope>
    <source>
        <strain>ORS 278</strain>
    </source>
</reference>
<evidence type="ECO:0000255" key="1">
    <source>
        <dbReference type="HAMAP-Rule" id="MF_00215"/>
    </source>
</evidence>
<accession>A4YJV7</accession>
<gene>
    <name evidence="1" type="primary">coaA</name>
    <name type="ordered locus">BRADO0218</name>
</gene>
<sequence>MDMRTTEQQYNPYRVFTRQQWAELRNDTPMTLEPGEFSKLRSMHDRLDLQEVEEIYLPLSRLLSMYVDAAQRLYYAQRQFLGIRDRKMPYIIGVAGSVSVGKSTTARVLQALLTRWSPRPKVDLITTDGFLYPNAVLERQGLMQKKGFPESYDLPRLLAFLSDIKAGRHPVRAPVYSHLSYDIVPNQWTEIDQPDILIVEGVNVLQTGPLPRDGKAVPVVSDFFDFSVYIDAEEAVLRRWYVKRFLSLRDTAFHDPRSYFNRYALLSDEEATATAIAIWERTNLANLEDNILPTRPRATLILKKGADHEIETVALRRL</sequence>
<comment type="catalytic activity">
    <reaction evidence="1">
        <text>(R)-pantothenate + ATP = (R)-4'-phosphopantothenate + ADP + H(+)</text>
        <dbReference type="Rhea" id="RHEA:16373"/>
        <dbReference type="ChEBI" id="CHEBI:10986"/>
        <dbReference type="ChEBI" id="CHEBI:15378"/>
        <dbReference type="ChEBI" id="CHEBI:29032"/>
        <dbReference type="ChEBI" id="CHEBI:30616"/>
        <dbReference type="ChEBI" id="CHEBI:456216"/>
        <dbReference type="EC" id="2.7.1.33"/>
    </reaction>
</comment>
<comment type="pathway">
    <text evidence="1">Cofactor biosynthesis; coenzyme A biosynthesis; CoA from (R)-pantothenate: step 1/5.</text>
</comment>
<comment type="subcellular location">
    <subcellularLocation>
        <location evidence="1">Cytoplasm</location>
    </subcellularLocation>
</comment>
<comment type="similarity">
    <text evidence="1">Belongs to the prokaryotic pantothenate kinase family.</text>
</comment>
<dbReference type="EC" id="2.7.1.33" evidence="1"/>
<dbReference type="EMBL" id="CU234118">
    <property type="protein sequence ID" value="CAL74183.1"/>
    <property type="molecule type" value="Genomic_DNA"/>
</dbReference>
<dbReference type="RefSeq" id="WP_011923471.1">
    <property type="nucleotide sequence ID" value="NC_009445.1"/>
</dbReference>
<dbReference type="SMR" id="A4YJV7"/>
<dbReference type="STRING" id="114615.BRADO0218"/>
<dbReference type="KEGG" id="bra:BRADO0218"/>
<dbReference type="eggNOG" id="COG1072">
    <property type="taxonomic scope" value="Bacteria"/>
</dbReference>
<dbReference type="HOGENOM" id="CLU_053818_1_1_5"/>
<dbReference type="OrthoDB" id="1550976at2"/>
<dbReference type="UniPathway" id="UPA00241">
    <property type="reaction ID" value="UER00352"/>
</dbReference>
<dbReference type="Proteomes" id="UP000001994">
    <property type="component" value="Chromosome"/>
</dbReference>
<dbReference type="GO" id="GO:0005737">
    <property type="term" value="C:cytoplasm"/>
    <property type="evidence" value="ECO:0007669"/>
    <property type="project" value="UniProtKB-SubCell"/>
</dbReference>
<dbReference type="GO" id="GO:0005524">
    <property type="term" value="F:ATP binding"/>
    <property type="evidence" value="ECO:0007669"/>
    <property type="project" value="UniProtKB-UniRule"/>
</dbReference>
<dbReference type="GO" id="GO:0004594">
    <property type="term" value="F:pantothenate kinase activity"/>
    <property type="evidence" value="ECO:0007669"/>
    <property type="project" value="UniProtKB-UniRule"/>
</dbReference>
<dbReference type="GO" id="GO:0015937">
    <property type="term" value="P:coenzyme A biosynthetic process"/>
    <property type="evidence" value="ECO:0007669"/>
    <property type="project" value="UniProtKB-UniRule"/>
</dbReference>
<dbReference type="CDD" id="cd02025">
    <property type="entry name" value="PanK"/>
    <property type="match status" value="1"/>
</dbReference>
<dbReference type="FunFam" id="3.40.50.300:FF:000242">
    <property type="entry name" value="Pantothenate kinase"/>
    <property type="match status" value="1"/>
</dbReference>
<dbReference type="Gene3D" id="3.40.50.300">
    <property type="entry name" value="P-loop containing nucleotide triphosphate hydrolases"/>
    <property type="match status" value="1"/>
</dbReference>
<dbReference type="HAMAP" id="MF_00215">
    <property type="entry name" value="Pantothen_kinase_1"/>
    <property type="match status" value="1"/>
</dbReference>
<dbReference type="InterPro" id="IPR027417">
    <property type="entry name" value="P-loop_NTPase"/>
</dbReference>
<dbReference type="InterPro" id="IPR004566">
    <property type="entry name" value="PanK"/>
</dbReference>
<dbReference type="InterPro" id="IPR006083">
    <property type="entry name" value="PRK/URK"/>
</dbReference>
<dbReference type="NCBIfam" id="TIGR00554">
    <property type="entry name" value="panK_bact"/>
    <property type="match status" value="1"/>
</dbReference>
<dbReference type="PANTHER" id="PTHR10285">
    <property type="entry name" value="URIDINE KINASE"/>
    <property type="match status" value="1"/>
</dbReference>
<dbReference type="Pfam" id="PF00485">
    <property type="entry name" value="PRK"/>
    <property type="match status" value="1"/>
</dbReference>
<dbReference type="PIRSF" id="PIRSF000545">
    <property type="entry name" value="Pantothenate_kin"/>
    <property type="match status" value="1"/>
</dbReference>
<dbReference type="SUPFAM" id="SSF52540">
    <property type="entry name" value="P-loop containing nucleoside triphosphate hydrolases"/>
    <property type="match status" value="1"/>
</dbReference>